<sequence>MSLLTEVETLTRNGWECRCSDSSDPLVVAASIIGILHLILWILDRLFFKCIYRRFKYGLKRGPSTEGVPESMREEYRQEQQNAVDVDDGHFVNIELE</sequence>
<organismHost>
    <name type="scientific">Aves</name>
    <dbReference type="NCBI Taxonomy" id="8782"/>
</organismHost>
<organismHost>
    <name type="scientific">Felis catus</name>
    <name type="common">Cat</name>
    <name type="synonym">Felis silvestris catus</name>
    <dbReference type="NCBI Taxonomy" id="9685"/>
</organismHost>
<organismHost>
    <name type="scientific">Homo sapiens</name>
    <name type="common">Human</name>
    <dbReference type="NCBI Taxonomy" id="9606"/>
</organismHost>
<organismHost>
    <name type="scientific">Panthera pardus</name>
    <name type="common">Leopard</name>
    <name type="synonym">Felis pardus</name>
    <dbReference type="NCBI Taxonomy" id="9691"/>
</organismHost>
<organismHost>
    <name type="scientific">Panthera tigris</name>
    <name type="common">Tiger</name>
    <dbReference type="NCBI Taxonomy" id="9694"/>
</organismHost>
<organismHost>
    <name type="scientific">Sus scrofa</name>
    <name type="common">Pig</name>
    <dbReference type="NCBI Taxonomy" id="9823"/>
</organismHost>
<feature type="chain" id="PRO_0000311628" description="Matrix protein 2">
    <location>
        <begin position="1"/>
        <end position="97"/>
    </location>
</feature>
<feature type="topological domain" description="Virion surface" evidence="1">
    <location>
        <begin position="1"/>
        <end position="22"/>
    </location>
</feature>
<feature type="transmembrane region" description="Helical; Signal-anchor for type III membrane protein" evidence="1">
    <location>
        <begin position="23"/>
        <end position="43"/>
    </location>
</feature>
<feature type="topological domain" description="Intravirion" evidence="1">
    <location>
        <begin position="44"/>
        <end position="97"/>
    </location>
</feature>
<feature type="region of interest" description="Disordered" evidence="2">
    <location>
        <begin position="61"/>
        <end position="80"/>
    </location>
</feature>
<feature type="site" description="Essential for channel activity, possibly by being protonated during channel activation, and by forming the channel gate and the selective filter" evidence="1">
    <location>
        <position position="37"/>
    </location>
</feature>
<feature type="site" description="Seems to be involved in pH gating" evidence="1">
    <location>
        <position position="41"/>
    </location>
</feature>
<feature type="modified residue" description="Phosphoserine; by host" evidence="1">
    <location>
        <position position="64"/>
    </location>
</feature>
<feature type="lipid moiety-binding region" description="S-palmitoyl cysteine; by host" evidence="1">
    <location>
        <position position="50"/>
    </location>
</feature>
<feature type="disulfide bond" description="Interchain (with C-17)" evidence="1">
    <location>
        <position position="17"/>
    </location>
</feature>
<feature type="disulfide bond" description="Interchain (with C-19)" evidence="1">
    <location>
        <position position="19"/>
    </location>
</feature>
<name>M2_I02A3</name>
<organism>
    <name type="scientific">Influenza A virus (strain A/Chicken/Hong Kong/37.4/2002 H5N1 genotype X2)</name>
    <dbReference type="NCBI Taxonomy" id="284172"/>
    <lineage>
        <taxon>Viruses</taxon>
        <taxon>Riboviria</taxon>
        <taxon>Orthornavirae</taxon>
        <taxon>Negarnaviricota</taxon>
        <taxon>Polyploviricotina</taxon>
        <taxon>Insthoviricetes</taxon>
        <taxon>Articulavirales</taxon>
        <taxon>Orthomyxoviridae</taxon>
        <taxon>Alphainfluenzavirus</taxon>
        <taxon>Alphainfluenzavirus influenzae</taxon>
        <taxon>Influenza A virus</taxon>
    </lineage>
</organism>
<proteinExistence type="inferred from homology"/>
<gene>
    <name evidence="1" type="primary">M</name>
</gene>
<evidence type="ECO:0000255" key="1">
    <source>
        <dbReference type="HAMAP-Rule" id="MF_04069"/>
    </source>
</evidence>
<evidence type="ECO:0000256" key="2">
    <source>
        <dbReference type="SAM" id="MobiDB-lite"/>
    </source>
</evidence>
<keyword id="KW-0025">Alternative splicing</keyword>
<keyword id="KW-1015">Disulfide bond</keyword>
<keyword id="KW-1032">Host cell membrane</keyword>
<keyword id="KW-1043">Host membrane</keyword>
<keyword id="KW-0945">Host-virus interaction</keyword>
<keyword id="KW-0375">Hydrogen ion transport</keyword>
<keyword id="KW-1083">Inhibition of host autophagy by virus</keyword>
<keyword id="KW-0407">Ion channel</keyword>
<keyword id="KW-0406">Ion transport</keyword>
<keyword id="KW-0449">Lipoprotein</keyword>
<keyword id="KW-0472">Membrane</keyword>
<keyword id="KW-0564">Palmitate</keyword>
<keyword id="KW-0597">Phosphoprotein</keyword>
<keyword id="KW-0735">Signal-anchor</keyword>
<keyword id="KW-0812">Transmembrane</keyword>
<keyword id="KW-1133">Transmembrane helix</keyword>
<keyword id="KW-0813">Transport</keyword>
<keyword id="KW-1182">Viral ion channel</keyword>
<keyword id="KW-0946">Virion</keyword>
<protein>
    <recommendedName>
        <fullName evidence="1">Matrix protein 2</fullName>
    </recommendedName>
    <alternativeName>
        <fullName evidence="1">Proton channel protein M2</fullName>
    </alternativeName>
</protein>
<comment type="function">
    <text evidence="1">Forms a proton-selective ion channel that is necessary for the efficient release of the viral genome during virus entry. After attaching to the cell surface, the virion enters the cell by endocytosis. Acidification of the endosome triggers M2 ion channel activity. The influx of protons into virion interior is believed to disrupt interactions between the viral ribonucleoprotein (RNP), matrix protein 1 (M1), and lipid bilayers, thereby freeing the viral genome from interaction with viral proteins and enabling RNA segments to migrate to the host cell nucleus, where influenza virus RNA transcription and replication occur. Also plays a role in viral proteins secretory pathway. Elevates the intravesicular pH of normally acidic compartments, such as trans-Golgi network, preventing newly formed hemagglutinin from premature switching to the fusion-active conformation.</text>
</comment>
<comment type="activity regulation">
    <text>The M2 protein from most influenza A strains is inhibited by amantadine and rimantadine, resulting in viral uncoating incapacity. Emergence of amantadine-resistant variants is usually rapid.</text>
</comment>
<comment type="subunit">
    <text evidence="1">Homotetramer; composed of two disulfide-linked dimers held together by non-covalent interactions. May interact with matrix protein 1.</text>
</comment>
<comment type="subcellular location">
    <subcellularLocation>
        <location evidence="1">Virion membrane</location>
    </subcellularLocation>
    <subcellularLocation>
        <location evidence="1">Host apical cell membrane</location>
        <topology evidence="1">Single-pass type III membrane protein</topology>
    </subcellularLocation>
    <text evidence="1">Abundantly expressed at the apical plasma membrane in infected polarized epithelial cells, in close proximity to budding and assembled virions. Minor component of virions (only 16-20 molecules/virion).</text>
</comment>
<comment type="alternative products">
    <event type="alternative splicing"/>
    <isoform>
        <id>Q6DPT9-1</id>
        <name>M2</name>
        <sequence type="displayed"/>
    </isoform>
    <isoform>
        <id>Q6DPT8-1</id>
        <name>M1</name>
        <sequence type="external"/>
    </isoform>
    <text>Only the first 9 residues are shared by the 2 isoforms.</text>
</comment>
<comment type="domain">
    <text evidence="1">Cytoplasmic tail plays an important role in virion assembly and morphogenesis.</text>
</comment>
<comment type="miscellaneous">
    <text evidence="1">When the channel is activated, one or more imidazole moieties of His-37 probably become bi-protonated.</text>
</comment>
<comment type="similarity">
    <text evidence="1">Belongs to the influenza viruses matrix protein M2 family.</text>
</comment>
<reference key="1">
    <citation type="journal article" date="2004" name="Nature">
        <title>Genesis of a highly pathogenic and potentially pandemic H5N1 influenza virus in eastern Asia.</title>
        <authorList>
            <person name="Li K.S."/>
            <person name="Guan Y."/>
            <person name="Wang J."/>
            <person name="Smith G.J.D."/>
            <person name="Xu K.M."/>
            <person name="Duan L."/>
            <person name="Rahardjo A.P."/>
            <person name="Puthavathana P."/>
            <person name="Buranathai C."/>
            <person name="Nguyen T.D."/>
            <person name="Estoepangestie A.T.S."/>
            <person name="Chaisingh A."/>
            <person name="Auewarakul P."/>
            <person name="Long H.T."/>
            <person name="Hanh N.T.H."/>
            <person name="Webby R.J."/>
            <person name="Poon L.L.M."/>
            <person name="Chen H."/>
            <person name="Shortridge K.F."/>
            <person name="Yuen K.Y."/>
            <person name="Webster R.G."/>
            <person name="Peiris J.S.M."/>
        </authorList>
    </citation>
    <scope>NUCLEOTIDE SEQUENCE [GENOMIC RNA]</scope>
</reference>
<accession>Q6DPT9</accession>
<dbReference type="EMBL" id="AY651401">
    <property type="protein sequence ID" value="AAT70554.1"/>
    <property type="molecule type" value="Genomic_RNA"/>
</dbReference>
<dbReference type="SMR" id="Q6DPT9"/>
<dbReference type="IntAct" id="Q6DPT9">
    <property type="interactions" value="1"/>
</dbReference>
<dbReference type="GO" id="GO:0020002">
    <property type="term" value="C:host cell plasma membrane"/>
    <property type="evidence" value="ECO:0007669"/>
    <property type="project" value="UniProtKB-SubCell"/>
</dbReference>
<dbReference type="GO" id="GO:0016020">
    <property type="term" value="C:membrane"/>
    <property type="evidence" value="ECO:0007669"/>
    <property type="project" value="UniProtKB-UniRule"/>
</dbReference>
<dbReference type="GO" id="GO:0055036">
    <property type="term" value="C:virion membrane"/>
    <property type="evidence" value="ECO:0007669"/>
    <property type="project" value="UniProtKB-SubCell"/>
</dbReference>
<dbReference type="GO" id="GO:0005216">
    <property type="term" value="F:monoatomic ion channel activity"/>
    <property type="evidence" value="ECO:0007669"/>
    <property type="project" value="UniProtKB-UniRule"/>
</dbReference>
<dbReference type="GO" id="GO:0015078">
    <property type="term" value="F:proton transmembrane transporter activity"/>
    <property type="evidence" value="ECO:0007669"/>
    <property type="project" value="UniProtKB-UniRule"/>
</dbReference>
<dbReference type="GO" id="GO:0051259">
    <property type="term" value="P:protein complex oligomerization"/>
    <property type="evidence" value="ECO:0007669"/>
    <property type="project" value="UniProtKB-UniRule"/>
</dbReference>
<dbReference type="GO" id="GO:0044694">
    <property type="term" value="P:symbiont genome entry into host cell via pore formation in plasma membrane"/>
    <property type="evidence" value="ECO:0007669"/>
    <property type="project" value="UniProtKB-UniRule"/>
</dbReference>
<dbReference type="GO" id="GO:0140321">
    <property type="term" value="P:symbiont-mediated suppression of host autophagy"/>
    <property type="evidence" value="ECO:0007669"/>
    <property type="project" value="UniProtKB-KW"/>
</dbReference>
<dbReference type="Gene3D" id="6.10.250.1640">
    <property type="match status" value="1"/>
</dbReference>
<dbReference type="HAMAP" id="MF_04069">
    <property type="entry name" value="INFV_M2"/>
    <property type="match status" value="1"/>
</dbReference>
<dbReference type="InterPro" id="IPR002089">
    <property type="entry name" value="Flu_M2"/>
</dbReference>
<dbReference type="Pfam" id="PF00599">
    <property type="entry name" value="Flu_M2"/>
    <property type="match status" value="1"/>
</dbReference>